<evidence type="ECO:0000255" key="1">
    <source>
        <dbReference type="HAMAP-Rule" id="MF_01537"/>
    </source>
</evidence>
<comment type="function">
    <text evidence="1">Catalyzes the phosphorolysis of diverse nucleosides, yielding D-ribose 1-phosphate and the respective free bases. Can use uridine, adenosine, guanosine, cytidine, thymidine, inosine and xanthosine as substrates. Also catalyzes the reverse reactions.</text>
</comment>
<comment type="catalytic activity">
    <reaction evidence="1">
        <text>a purine D-ribonucleoside + phosphate = a purine nucleobase + alpha-D-ribose 1-phosphate</text>
        <dbReference type="Rhea" id="RHEA:19805"/>
        <dbReference type="ChEBI" id="CHEBI:26386"/>
        <dbReference type="ChEBI" id="CHEBI:43474"/>
        <dbReference type="ChEBI" id="CHEBI:57720"/>
        <dbReference type="ChEBI" id="CHEBI:142355"/>
        <dbReference type="EC" id="2.4.2.1"/>
    </reaction>
</comment>
<comment type="catalytic activity">
    <reaction evidence="1">
        <text>adenosine + phosphate = alpha-D-ribose 1-phosphate + adenine</text>
        <dbReference type="Rhea" id="RHEA:27642"/>
        <dbReference type="ChEBI" id="CHEBI:16335"/>
        <dbReference type="ChEBI" id="CHEBI:16708"/>
        <dbReference type="ChEBI" id="CHEBI:43474"/>
        <dbReference type="ChEBI" id="CHEBI:57720"/>
        <dbReference type="EC" id="2.4.2.1"/>
    </reaction>
</comment>
<comment type="catalytic activity">
    <reaction evidence="1">
        <text>cytidine + phosphate = cytosine + alpha-D-ribose 1-phosphate</text>
        <dbReference type="Rhea" id="RHEA:52540"/>
        <dbReference type="ChEBI" id="CHEBI:16040"/>
        <dbReference type="ChEBI" id="CHEBI:17562"/>
        <dbReference type="ChEBI" id="CHEBI:43474"/>
        <dbReference type="ChEBI" id="CHEBI:57720"/>
        <dbReference type="EC" id="2.4.2.2"/>
    </reaction>
</comment>
<comment type="catalytic activity">
    <reaction evidence="1">
        <text>guanosine + phosphate = alpha-D-ribose 1-phosphate + guanine</text>
        <dbReference type="Rhea" id="RHEA:13233"/>
        <dbReference type="ChEBI" id="CHEBI:16235"/>
        <dbReference type="ChEBI" id="CHEBI:16750"/>
        <dbReference type="ChEBI" id="CHEBI:43474"/>
        <dbReference type="ChEBI" id="CHEBI:57720"/>
        <dbReference type="EC" id="2.4.2.1"/>
    </reaction>
</comment>
<comment type="catalytic activity">
    <reaction evidence="1">
        <text>inosine + phosphate = alpha-D-ribose 1-phosphate + hypoxanthine</text>
        <dbReference type="Rhea" id="RHEA:27646"/>
        <dbReference type="ChEBI" id="CHEBI:17368"/>
        <dbReference type="ChEBI" id="CHEBI:17596"/>
        <dbReference type="ChEBI" id="CHEBI:43474"/>
        <dbReference type="ChEBI" id="CHEBI:57720"/>
        <dbReference type="EC" id="2.4.2.1"/>
    </reaction>
</comment>
<comment type="catalytic activity">
    <reaction evidence="1">
        <text>thymidine + phosphate = 2-deoxy-alpha-D-ribose 1-phosphate + thymine</text>
        <dbReference type="Rhea" id="RHEA:16037"/>
        <dbReference type="ChEBI" id="CHEBI:17748"/>
        <dbReference type="ChEBI" id="CHEBI:17821"/>
        <dbReference type="ChEBI" id="CHEBI:43474"/>
        <dbReference type="ChEBI" id="CHEBI:57259"/>
        <dbReference type="EC" id="2.4.2.2"/>
    </reaction>
</comment>
<comment type="catalytic activity">
    <reaction evidence="1">
        <text>uridine + phosphate = alpha-D-ribose 1-phosphate + uracil</text>
        <dbReference type="Rhea" id="RHEA:24388"/>
        <dbReference type="ChEBI" id="CHEBI:16704"/>
        <dbReference type="ChEBI" id="CHEBI:17568"/>
        <dbReference type="ChEBI" id="CHEBI:43474"/>
        <dbReference type="ChEBI" id="CHEBI:57720"/>
        <dbReference type="EC" id="2.4.2.2"/>
    </reaction>
</comment>
<comment type="catalytic activity">
    <reaction evidence="1">
        <text>xanthosine + phosphate = alpha-D-ribose 1-phosphate + xanthine</text>
        <dbReference type="Rhea" id="RHEA:27638"/>
        <dbReference type="ChEBI" id="CHEBI:17712"/>
        <dbReference type="ChEBI" id="CHEBI:18107"/>
        <dbReference type="ChEBI" id="CHEBI:43474"/>
        <dbReference type="ChEBI" id="CHEBI:57720"/>
        <dbReference type="EC" id="2.4.2.1"/>
    </reaction>
</comment>
<comment type="similarity">
    <text evidence="1">Belongs to the nucleoside phosphorylase PpnP family.</text>
</comment>
<name>PPNP_GEOSL</name>
<keyword id="KW-0328">Glycosyltransferase</keyword>
<keyword id="KW-1185">Reference proteome</keyword>
<keyword id="KW-0808">Transferase</keyword>
<gene>
    <name evidence="1" type="primary">ppnP</name>
    <name type="ordered locus">GSU1328</name>
</gene>
<feature type="chain" id="PRO_0000211767" description="Pyrimidine/purine nucleoside phosphorylase">
    <location>
        <begin position="1"/>
        <end position="104"/>
    </location>
</feature>
<sequence length="104" mass="11228">MSEFTNVTIIREANVYFDGGVVSRTVVFPDGTKKTLGIMQPGEYTFTTGAPEIMEILSGELDLKLPGSDAWNRVGGGESFDVPANSSFTMKVLSLTDYCCSFLG</sequence>
<dbReference type="EC" id="2.4.2.1" evidence="1"/>
<dbReference type="EC" id="2.4.2.2" evidence="1"/>
<dbReference type="EMBL" id="AE017180">
    <property type="protein sequence ID" value="AAR34704.1"/>
    <property type="molecule type" value="Genomic_DNA"/>
</dbReference>
<dbReference type="RefSeq" id="NP_952381.1">
    <property type="nucleotide sequence ID" value="NC_002939.5"/>
</dbReference>
<dbReference type="RefSeq" id="WP_010941982.1">
    <property type="nucleotide sequence ID" value="NC_002939.5"/>
</dbReference>
<dbReference type="SMR" id="Q74DI8"/>
<dbReference type="FunCoup" id="Q74DI8">
    <property type="interactions" value="60"/>
</dbReference>
<dbReference type="STRING" id="243231.GSU1328"/>
<dbReference type="EnsemblBacteria" id="AAR34704">
    <property type="protein sequence ID" value="AAR34704"/>
    <property type="gene ID" value="GSU1328"/>
</dbReference>
<dbReference type="KEGG" id="gsu:GSU1328"/>
<dbReference type="PATRIC" id="fig|243231.5.peg.1325"/>
<dbReference type="eggNOG" id="COG3123">
    <property type="taxonomic scope" value="Bacteria"/>
</dbReference>
<dbReference type="HOGENOM" id="CLU_157874_1_0_7"/>
<dbReference type="InParanoid" id="Q74DI8"/>
<dbReference type="OrthoDB" id="9793848at2"/>
<dbReference type="Proteomes" id="UP000000577">
    <property type="component" value="Chromosome"/>
</dbReference>
<dbReference type="GO" id="GO:0005829">
    <property type="term" value="C:cytosol"/>
    <property type="evidence" value="ECO:0000318"/>
    <property type="project" value="GO_Central"/>
</dbReference>
<dbReference type="GO" id="GO:0047975">
    <property type="term" value="F:guanosine phosphorylase activity"/>
    <property type="evidence" value="ECO:0007669"/>
    <property type="project" value="UniProtKB-EC"/>
</dbReference>
<dbReference type="GO" id="GO:0004731">
    <property type="term" value="F:purine-nucleoside phosphorylase activity"/>
    <property type="evidence" value="ECO:0000318"/>
    <property type="project" value="GO_Central"/>
</dbReference>
<dbReference type="GO" id="GO:0016154">
    <property type="term" value="F:pyrimidine-nucleoside phosphorylase activity"/>
    <property type="evidence" value="ECO:0000318"/>
    <property type="project" value="GO_Central"/>
</dbReference>
<dbReference type="GO" id="GO:0009032">
    <property type="term" value="F:thymidine phosphorylase activity"/>
    <property type="evidence" value="ECO:0007669"/>
    <property type="project" value="UniProtKB-EC"/>
</dbReference>
<dbReference type="GO" id="GO:0004850">
    <property type="term" value="F:uridine phosphorylase activity"/>
    <property type="evidence" value="ECO:0007669"/>
    <property type="project" value="UniProtKB-EC"/>
</dbReference>
<dbReference type="CDD" id="cd20296">
    <property type="entry name" value="cupin_PpnP-like"/>
    <property type="match status" value="1"/>
</dbReference>
<dbReference type="FunFam" id="2.60.120.10:FF:000016">
    <property type="entry name" value="Pyrimidine/purine nucleoside phosphorylase"/>
    <property type="match status" value="1"/>
</dbReference>
<dbReference type="Gene3D" id="2.60.120.10">
    <property type="entry name" value="Jelly Rolls"/>
    <property type="match status" value="1"/>
</dbReference>
<dbReference type="HAMAP" id="MF_01537">
    <property type="entry name" value="Nucleos_phosphorylase_PpnP"/>
    <property type="match status" value="1"/>
</dbReference>
<dbReference type="InterPro" id="IPR009664">
    <property type="entry name" value="Ppnp"/>
</dbReference>
<dbReference type="InterPro" id="IPR014710">
    <property type="entry name" value="RmlC-like_jellyroll"/>
</dbReference>
<dbReference type="InterPro" id="IPR011051">
    <property type="entry name" value="RmlC_Cupin_sf"/>
</dbReference>
<dbReference type="PANTHER" id="PTHR36540">
    <property type="entry name" value="PYRIMIDINE/PURINE NUCLEOSIDE PHOSPHORYLASE"/>
    <property type="match status" value="1"/>
</dbReference>
<dbReference type="PANTHER" id="PTHR36540:SF1">
    <property type="entry name" value="PYRIMIDINE_PURINE NUCLEOSIDE PHOSPHORYLASE"/>
    <property type="match status" value="1"/>
</dbReference>
<dbReference type="Pfam" id="PF06865">
    <property type="entry name" value="Ppnp"/>
    <property type="match status" value="1"/>
</dbReference>
<dbReference type="SUPFAM" id="SSF51182">
    <property type="entry name" value="RmlC-like cupins"/>
    <property type="match status" value="1"/>
</dbReference>
<accession>Q74DI8</accession>
<reference key="1">
    <citation type="journal article" date="2003" name="Science">
        <title>Genome of Geobacter sulfurreducens: metal reduction in subsurface environments.</title>
        <authorList>
            <person name="Methe B.A."/>
            <person name="Nelson K.E."/>
            <person name="Eisen J.A."/>
            <person name="Paulsen I.T."/>
            <person name="Nelson W.C."/>
            <person name="Heidelberg J.F."/>
            <person name="Wu D."/>
            <person name="Wu M."/>
            <person name="Ward N.L."/>
            <person name="Beanan M.J."/>
            <person name="Dodson R.J."/>
            <person name="Madupu R."/>
            <person name="Brinkac L.M."/>
            <person name="Daugherty S.C."/>
            <person name="DeBoy R.T."/>
            <person name="Durkin A.S."/>
            <person name="Gwinn M.L."/>
            <person name="Kolonay J.F."/>
            <person name="Sullivan S.A."/>
            <person name="Haft D.H."/>
            <person name="Selengut J."/>
            <person name="Davidsen T.M."/>
            <person name="Zafar N."/>
            <person name="White O."/>
            <person name="Tran B."/>
            <person name="Romero C."/>
            <person name="Forberger H.A."/>
            <person name="Weidman J.F."/>
            <person name="Khouri H.M."/>
            <person name="Feldblyum T.V."/>
            <person name="Utterback T.R."/>
            <person name="Van Aken S.E."/>
            <person name="Lovley D.R."/>
            <person name="Fraser C.M."/>
        </authorList>
    </citation>
    <scope>NUCLEOTIDE SEQUENCE [LARGE SCALE GENOMIC DNA]</scope>
    <source>
        <strain>ATCC 51573 / DSM 12127 / PCA</strain>
    </source>
</reference>
<protein>
    <recommendedName>
        <fullName evidence="1">Pyrimidine/purine nucleoside phosphorylase</fullName>
        <ecNumber evidence="1">2.4.2.1</ecNumber>
        <ecNumber evidence="1">2.4.2.2</ecNumber>
    </recommendedName>
    <alternativeName>
        <fullName evidence="1">Adenosine phosphorylase</fullName>
    </alternativeName>
    <alternativeName>
        <fullName evidence="1">Cytidine phosphorylase</fullName>
    </alternativeName>
    <alternativeName>
        <fullName evidence="1">Guanosine phosphorylase</fullName>
    </alternativeName>
    <alternativeName>
        <fullName evidence="1">Inosine phosphorylase</fullName>
    </alternativeName>
    <alternativeName>
        <fullName evidence="1">Thymidine phosphorylase</fullName>
    </alternativeName>
    <alternativeName>
        <fullName evidence="1">Uridine phosphorylase</fullName>
    </alternativeName>
    <alternativeName>
        <fullName evidence="1">Xanthosine phosphorylase</fullName>
    </alternativeName>
</protein>
<proteinExistence type="inferred from homology"/>
<organism>
    <name type="scientific">Geobacter sulfurreducens (strain ATCC 51573 / DSM 12127 / PCA)</name>
    <dbReference type="NCBI Taxonomy" id="243231"/>
    <lineage>
        <taxon>Bacteria</taxon>
        <taxon>Pseudomonadati</taxon>
        <taxon>Thermodesulfobacteriota</taxon>
        <taxon>Desulfuromonadia</taxon>
        <taxon>Geobacterales</taxon>
        <taxon>Geobacteraceae</taxon>
        <taxon>Geobacter</taxon>
    </lineage>
</organism>